<comment type="function">
    <text evidence="1">FMRFamides and FMRFamide-like peptides are neuropeptides.</text>
</comment>
<comment type="subcellular location">
    <subcellularLocation>
        <location evidence="6">Secreted</location>
    </subcellularLocation>
</comment>
<comment type="similarity">
    <text evidence="2">Belongs to the FARP (FMRF amide related peptide) family.</text>
</comment>
<proteinExistence type="evidence at protein level"/>
<accession>B3A0C4</accession>
<protein>
    <recommendedName>
        <fullName evidence="4">Extended FMRFamide-5</fullName>
        <shortName evidence="4">FMRFa-5</shortName>
    </recommendedName>
</protein>
<sequence length="8" mass="1034">TDRNFLRL</sequence>
<evidence type="ECO:0000250" key="1">
    <source>
        <dbReference type="UniProtKB" id="P34405"/>
    </source>
</evidence>
<evidence type="ECO:0000255" key="2"/>
<evidence type="ECO:0000269" key="3">
    <source>
    </source>
</evidence>
<evidence type="ECO:0000303" key="4">
    <source>
    </source>
</evidence>
<evidence type="ECO:0000305" key="5"/>
<evidence type="ECO:0000305" key="6">
    <source>
    </source>
</evidence>
<reference evidence="5" key="1">
    <citation type="journal article" date="2012" name="Syst. Biol.">
        <title>Peptidomics-based phylogeny and biogeography of Mantophasmatodea (Hexapoda).</title>
        <authorList>
            <person name="Predel R."/>
            <person name="Neupert S."/>
            <person name="Huetteroth W."/>
            <person name="Kahnt J."/>
            <person name="Waidelich D."/>
            <person name="Roth S."/>
        </authorList>
    </citation>
    <scope>PROTEIN SEQUENCE</scope>
    <scope>AMIDATION AT LEU-8</scope>
    <source>
        <tissue evidence="3">Thoracic perisympathetic organs</tissue>
    </source>
</reference>
<organism>
    <name type="scientific">Hemilobophasma montaguense</name>
    <name type="common">Gladiator</name>
    <name type="synonym">Heel-walker</name>
    <dbReference type="NCBI Taxonomy" id="253130"/>
    <lineage>
        <taxon>Eukaryota</taxon>
        <taxon>Metazoa</taxon>
        <taxon>Ecdysozoa</taxon>
        <taxon>Arthropoda</taxon>
        <taxon>Hexapoda</taxon>
        <taxon>Insecta</taxon>
        <taxon>Pterygota</taxon>
        <taxon>Neoptera</taxon>
        <taxon>Polyneoptera</taxon>
        <taxon>Mantophasmatodea</taxon>
        <taxon>Austrophasmatidae</taxon>
        <taxon>Hemilobophasma</taxon>
    </lineage>
</organism>
<name>FAR5_HEMMO</name>
<dbReference type="GO" id="GO:0005576">
    <property type="term" value="C:extracellular region"/>
    <property type="evidence" value="ECO:0007669"/>
    <property type="project" value="UniProtKB-SubCell"/>
</dbReference>
<dbReference type="GO" id="GO:0007218">
    <property type="term" value="P:neuropeptide signaling pathway"/>
    <property type="evidence" value="ECO:0007669"/>
    <property type="project" value="UniProtKB-KW"/>
</dbReference>
<feature type="peptide" id="PRO_0000421513" description="Extended FMRFamide-5" evidence="3">
    <location>
        <begin position="1"/>
        <end position="8"/>
    </location>
</feature>
<feature type="modified residue" description="Leucine amide" evidence="3">
    <location>
        <position position="8"/>
    </location>
</feature>
<feature type="unsure residue" description="L or I" evidence="3">
    <location>
        <position position="6"/>
    </location>
</feature>
<feature type="unsure residue" description="L or I" evidence="3">
    <location>
        <position position="8"/>
    </location>
</feature>
<keyword id="KW-0027">Amidation</keyword>
<keyword id="KW-0903">Direct protein sequencing</keyword>
<keyword id="KW-0527">Neuropeptide</keyword>
<keyword id="KW-0964">Secreted</keyword>